<sequence>MSEAKKGHVLFFPYPLQGHINPMIQLAKRLSKKGITSTLIIASKDHREPYTSDDYSITVHTIHDGFFPHEHPHAKFVDLDRFHNSTSRSLTDFISSAKLSDNPPKALIYDPFMPFALDIAKDLDLYVVAYFTQPWLASLVYYHINEGTYDVPVDRHENPTLASFPGFPLLSQDDLPSFACEKGSYPLLHEFVVRQFSNLLQADCILCNTFDQLEPKVVKWMNDQWPVKNIGPVVPSKFLDNRLPEDKDYELENSKTEPDESVLKWLGNRPAKSVVYVAFGTLVALSEKQMKEIAMAISQTGYHFLWSVRESERSKLPSGFIEEAEEKDSGLVAKWVPQLEVLAHESIGCFVSHCGWNSTLEALCLGVPMVGVPQWTDQPTNAKFIEDVWKIGVRVRTDGEGLSSKEEIARCIVEVMEGERGKEIRKNVEKLKVLAREAISEGGSSDKKIDEFVALLT</sequence>
<keyword id="KW-0328">Glycosyltransferase</keyword>
<keyword id="KW-1185">Reference proteome</keyword>
<keyword id="KW-0808">Transferase</keyword>
<name>U74C1_ARATH</name>
<gene>
    <name type="primary">UGT74C1</name>
    <name type="ordered locus">At2g31790</name>
    <name type="ORF">F20M17.17</name>
</gene>
<reference key="1">
    <citation type="journal article" date="1999" name="Nature">
        <title>Sequence and analysis of chromosome 2 of the plant Arabidopsis thaliana.</title>
        <authorList>
            <person name="Lin X."/>
            <person name="Kaul S."/>
            <person name="Rounsley S.D."/>
            <person name="Shea T.P."/>
            <person name="Benito M.-I."/>
            <person name="Town C.D."/>
            <person name="Fujii C.Y."/>
            <person name="Mason T.M."/>
            <person name="Bowman C.L."/>
            <person name="Barnstead M.E."/>
            <person name="Feldblyum T.V."/>
            <person name="Buell C.R."/>
            <person name="Ketchum K.A."/>
            <person name="Lee J.J."/>
            <person name="Ronning C.M."/>
            <person name="Koo H.L."/>
            <person name="Moffat K.S."/>
            <person name="Cronin L.A."/>
            <person name="Shen M."/>
            <person name="Pai G."/>
            <person name="Van Aken S."/>
            <person name="Umayam L."/>
            <person name="Tallon L.J."/>
            <person name="Gill J.E."/>
            <person name="Adams M.D."/>
            <person name="Carrera A.J."/>
            <person name="Creasy T.H."/>
            <person name="Goodman H.M."/>
            <person name="Somerville C.R."/>
            <person name="Copenhaver G.P."/>
            <person name="Preuss D."/>
            <person name="Nierman W.C."/>
            <person name="White O."/>
            <person name="Eisen J.A."/>
            <person name="Salzberg S.L."/>
            <person name="Fraser C.M."/>
            <person name="Venter J.C."/>
        </authorList>
    </citation>
    <scope>NUCLEOTIDE SEQUENCE [LARGE SCALE GENOMIC DNA]</scope>
    <source>
        <strain>cv. Columbia</strain>
    </source>
</reference>
<reference key="2">
    <citation type="journal article" date="2017" name="Plant J.">
        <title>Araport11: a complete reannotation of the Arabidopsis thaliana reference genome.</title>
        <authorList>
            <person name="Cheng C.Y."/>
            <person name="Krishnakumar V."/>
            <person name="Chan A.P."/>
            <person name="Thibaud-Nissen F."/>
            <person name="Schobel S."/>
            <person name="Town C.D."/>
        </authorList>
    </citation>
    <scope>GENOME REANNOTATION</scope>
    <source>
        <strain>cv. Columbia</strain>
    </source>
</reference>
<reference key="3">
    <citation type="journal article" date="2003" name="Science">
        <title>Empirical analysis of transcriptional activity in the Arabidopsis genome.</title>
        <authorList>
            <person name="Yamada K."/>
            <person name="Lim J."/>
            <person name="Dale J.M."/>
            <person name="Chen H."/>
            <person name="Shinn P."/>
            <person name="Palm C.J."/>
            <person name="Southwick A.M."/>
            <person name="Wu H.C."/>
            <person name="Kim C.J."/>
            <person name="Nguyen M."/>
            <person name="Pham P.K."/>
            <person name="Cheuk R.F."/>
            <person name="Karlin-Newmann G."/>
            <person name="Liu S.X."/>
            <person name="Lam B."/>
            <person name="Sakano H."/>
            <person name="Wu T."/>
            <person name="Yu G."/>
            <person name="Miranda M."/>
            <person name="Quach H.L."/>
            <person name="Tripp M."/>
            <person name="Chang C.H."/>
            <person name="Lee J.M."/>
            <person name="Toriumi M.J."/>
            <person name="Chan M.M."/>
            <person name="Tang C.C."/>
            <person name="Onodera C.S."/>
            <person name="Deng J.M."/>
            <person name="Akiyama K."/>
            <person name="Ansari Y."/>
            <person name="Arakawa T."/>
            <person name="Banh J."/>
            <person name="Banno F."/>
            <person name="Bowser L."/>
            <person name="Brooks S.Y."/>
            <person name="Carninci P."/>
            <person name="Chao Q."/>
            <person name="Choy N."/>
            <person name="Enju A."/>
            <person name="Goldsmith A.D."/>
            <person name="Gurjal M."/>
            <person name="Hansen N.F."/>
            <person name="Hayashizaki Y."/>
            <person name="Johnson-Hopson C."/>
            <person name="Hsuan V.W."/>
            <person name="Iida K."/>
            <person name="Karnes M."/>
            <person name="Khan S."/>
            <person name="Koesema E."/>
            <person name="Ishida J."/>
            <person name="Jiang P.X."/>
            <person name="Jones T."/>
            <person name="Kawai J."/>
            <person name="Kamiya A."/>
            <person name="Meyers C."/>
            <person name="Nakajima M."/>
            <person name="Narusaka M."/>
            <person name="Seki M."/>
            <person name="Sakurai T."/>
            <person name="Satou M."/>
            <person name="Tamse R."/>
            <person name="Vaysberg M."/>
            <person name="Wallender E.K."/>
            <person name="Wong C."/>
            <person name="Yamamura Y."/>
            <person name="Yuan S."/>
            <person name="Shinozaki K."/>
            <person name="Davis R.W."/>
            <person name="Theologis A."/>
            <person name="Ecker J.R."/>
        </authorList>
    </citation>
    <scope>NUCLEOTIDE SEQUENCE [LARGE SCALE MRNA]</scope>
    <source>
        <strain>cv. Columbia</strain>
    </source>
</reference>
<reference key="4">
    <citation type="journal article" date="2001" name="J. Biol. Chem.">
        <title>Phylogenetic analysis of the UDP-glycosyltransferase multigene family of Arabidopsis thaliana.</title>
        <authorList>
            <person name="Li Y."/>
            <person name="Baldauf S."/>
            <person name="Lim E.K."/>
            <person name="Bowles D.J."/>
        </authorList>
    </citation>
    <scope>GENE FAMILY</scope>
</reference>
<protein>
    <recommendedName>
        <fullName>UDP-glycosyltransferase 74C1</fullName>
        <ecNumber>2.4.1.-</ecNumber>
    </recommendedName>
</protein>
<feature type="chain" id="PRO_0000409100" description="UDP-glycosyltransferase 74C1">
    <location>
        <begin position="1"/>
        <end position="457"/>
    </location>
</feature>
<feature type="binding site" evidence="1">
    <location>
        <position position="281"/>
    </location>
    <ligand>
        <name>UDP-alpha-D-glucose</name>
        <dbReference type="ChEBI" id="CHEBI:58885"/>
    </ligand>
</feature>
<feature type="binding site" evidence="1">
    <location>
        <begin position="336"/>
        <end position="338"/>
    </location>
    <ligand>
        <name>UDP-alpha-D-glucose</name>
        <dbReference type="ChEBI" id="CHEBI:58885"/>
    </ligand>
</feature>
<feature type="binding site" evidence="1">
    <location>
        <begin position="353"/>
        <end position="361"/>
    </location>
    <ligand>
        <name>UDP-alpha-D-glucose</name>
        <dbReference type="ChEBI" id="CHEBI:58885"/>
    </ligand>
</feature>
<feature type="binding site" evidence="1">
    <location>
        <begin position="375"/>
        <end position="378"/>
    </location>
    <ligand>
        <name>UDP-alpha-D-glucose</name>
        <dbReference type="ChEBI" id="CHEBI:58885"/>
    </ligand>
</feature>
<organism>
    <name type="scientific">Arabidopsis thaliana</name>
    <name type="common">Mouse-ear cress</name>
    <dbReference type="NCBI Taxonomy" id="3702"/>
    <lineage>
        <taxon>Eukaryota</taxon>
        <taxon>Viridiplantae</taxon>
        <taxon>Streptophyta</taxon>
        <taxon>Embryophyta</taxon>
        <taxon>Tracheophyta</taxon>
        <taxon>Spermatophyta</taxon>
        <taxon>Magnoliopsida</taxon>
        <taxon>eudicotyledons</taxon>
        <taxon>Gunneridae</taxon>
        <taxon>Pentapetalae</taxon>
        <taxon>rosids</taxon>
        <taxon>malvids</taxon>
        <taxon>Brassicales</taxon>
        <taxon>Brassicaceae</taxon>
        <taxon>Camelineae</taxon>
        <taxon>Arabidopsis</taxon>
    </lineage>
</organism>
<accession>Q9SKC1</accession>
<evidence type="ECO:0000250" key="1"/>
<evidence type="ECO:0000305" key="2"/>
<dbReference type="EC" id="2.4.1.-"/>
<dbReference type="EMBL" id="AC006533">
    <property type="protein sequence ID" value="AAD32293.1"/>
    <property type="molecule type" value="Genomic_DNA"/>
</dbReference>
<dbReference type="EMBL" id="CP002685">
    <property type="protein sequence ID" value="AEC08584.1"/>
    <property type="molecule type" value="Genomic_DNA"/>
</dbReference>
<dbReference type="EMBL" id="AY056277">
    <property type="protein sequence ID" value="AAL07126.1"/>
    <property type="molecule type" value="mRNA"/>
</dbReference>
<dbReference type="EMBL" id="AY117218">
    <property type="protein sequence ID" value="AAM51293.1"/>
    <property type="molecule type" value="mRNA"/>
</dbReference>
<dbReference type="PIR" id="B84725">
    <property type="entry name" value="B84725"/>
</dbReference>
<dbReference type="RefSeq" id="NP_180738.1">
    <property type="nucleotide sequence ID" value="NM_128737.4"/>
</dbReference>
<dbReference type="SMR" id="Q9SKC1"/>
<dbReference type="BioGRID" id="3083">
    <property type="interactions" value="2"/>
</dbReference>
<dbReference type="FunCoup" id="Q9SKC1">
    <property type="interactions" value="184"/>
</dbReference>
<dbReference type="IntAct" id="Q9SKC1">
    <property type="interactions" value="2"/>
</dbReference>
<dbReference type="STRING" id="3702.Q9SKC1"/>
<dbReference type="CAZy" id="GT1">
    <property type="family name" value="Glycosyltransferase Family 1"/>
</dbReference>
<dbReference type="PaxDb" id="3702-AT2G31790.1"/>
<dbReference type="ProteomicsDB" id="243207"/>
<dbReference type="DNASU" id="817736"/>
<dbReference type="EnsemblPlants" id="AT2G31790.1">
    <property type="protein sequence ID" value="AT2G31790.1"/>
    <property type="gene ID" value="AT2G31790"/>
</dbReference>
<dbReference type="GeneID" id="817736"/>
<dbReference type="Gramene" id="AT2G31790.1">
    <property type="protein sequence ID" value="AT2G31790.1"/>
    <property type="gene ID" value="AT2G31790"/>
</dbReference>
<dbReference type="KEGG" id="ath:AT2G31790"/>
<dbReference type="Araport" id="AT2G31790"/>
<dbReference type="TAIR" id="AT2G31790"/>
<dbReference type="eggNOG" id="KOG1192">
    <property type="taxonomic scope" value="Eukaryota"/>
</dbReference>
<dbReference type="HOGENOM" id="CLU_001724_0_1_1"/>
<dbReference type="InParanoid" id="Q9SKC1"/>
<dbReference type="OMA" id="MNDQWPV"/>
<dbReference type="PhylomeDB" id="Q9SKC1"/>
<dbReference type="PRO" id="PR:Q9SKC1"/>
<dbReference type="Proteomes" id="UP000006548">
    <property type="component" value="Chromosome 2"/>
</dbReference>
<dbReference type="ExpressionAtlas" id="Q9SKC1">
    <property type="expression patterns" value="baseline and differential"/>
</dbReference>
<dbReference type="GO" id="GO:0005777">
    <property type="term" value="C:peroxisome"/>
    <property type="evidence" value="ECO:0007005"/>
    <property type="project" value="TAIR"/>
</dbReference>
<dbReference type="GO" id="GO:0035251">
    <property type="term" value="F:UDP-glucosyltransferase activity"/>
    <property type="evidence" value="ECO:0007669"/>
    <property type="project" value="UniProtKB-ARBA"/>
</dbReference>
<dbReference type="CDD" id="cd03784">
    <property type="entry name" value="GT1_Gtf-like"/>
    <property type="match status" value="1"/>
</dbReference>
<dbReference type="FunFam" id="3.40.50.2000:FF:000019">
    <property type="entry name" value="Glycosyltransferase"/>
    <property type="match status" value="1"/>
</dbReference>
<dbReference type="Gene3D" id="3.40.50.2000">
    <property type="entry name" value="Glycogen Phosphorylase B"/>
    <property type="match status" value="2"/>
</dbReference>
<dbReference type="InterPro" id="IPR002213">
    <property type="entry name" value="UDP_glucos_trans"/>
</dbReference>
<dbReference type="InterPro" id="IPR035595">
    <property type="entry name" value="UDP_glycos_trans_CS"/>
</dbReference>
<dbReference type="PANTHER" id="PTHR11926">
    <property type="entry name" value="GLUCOSYL/GLUCURONOSYL TRANSFERASES"/>
    <property type="match status" value="1"/>
</dbReference>
<dbReference type="PANTHER" id="PTHR11926:SF1356">
    <property type="entry name" value="UDP-GLYCOSYLTRANSFERASE 74C1"/>
    <property type="match status" value="1"/>
</dbReference>
<dbReference type="Pfam" id="PF00201">
    <property type="entry name" value="UDPGT"/>
    <property type="match status" value="1"/>
</dbReference>
<dbReference type="SUPFAM" id="SSF53756">
    <property type="entry name" value="UDP-Glycosyltransferase/glycogen phosphorylase"/>
    <property type="match status" value="1"/>
</dbReference>
<dbReference type="PROSITE" id="PS00375">
    <property type="entry name" value="UDPGT"/>
    <property type="match status" value="1"/>
</dbReference>
<comment type="similarity">
    <text evidence="2">Belongs to the UDP-glycosyltransferase family.</text>
</comment>
<proteinExistence type="evidence at transcript level"/>